<gene>
    <name type="primary">P/V</name>
</gene>
<protein>
    <recommendedName>
        <fullName>Phosphoprotein</fullName>
        <shortName>Protein P</shortName>
    </recommendedName>
</protein>
<organismHost>
    <name type="scientific">Homo sapiens</name>
    <name type="common">Human</name>
    <dbReference type="NCBI Taxonomy" id="9606"/>
</organismHost>
<accession>P19717</accession>
<feature type="chain" id="PRO_0000142696" description="Phosphoprotein">
    <location>
        <begin position="1"/>
        <end position="390"/>
    </location>
</feature>
<feature type="region of interest" description="Disordered" evidence="8">
    <location>
        <begin position="54"/>
        <end position="98"/>
    </location>
</feature>
<feature type="region of interest" description="Disordered" evidence="8">
    <location>
        <begin position="144"/>
        <end position="183"/>
    </location>
</feature>
<feature type="region of interest" description="Interaction with the nucleoprotein" evidence="1">
    <location>
        <begin position="342"/>
        <end position="390"/>
    </location>
</feature>
<feature type="compositionally biased region" description="Polar residues" evidence="8">
    <location>
        <begin position="54"/>
        <end position="65"/>
    </location>
</feature>
<feature type="modified residue" description="Phosphothreonine" evidence="2">
    <location>
        <position position="10"/>
    </location>
</feature>
<feature type="modified residue" description="Phosphothreonine" evidence="2">
    <location>
        <position position="16"/>
    </location>
</feature>
<feature type="modified residue" description="Phosphoserine" evidence="2">
    <location>
        <position position="69"/>
    </location>
</feature>
<feature type="modified residue" description="Phosphothreonine" evidence="2">
    <location>
        <position position="91"/>
    </location>
</feature>
<feature type="modified residue" description="Phosphothreonine" evidence="2">
    <location>
        <position position="150"/>
    </location>
</feature>
<feature type="modified residue" description="Phosphothreonine" evidence="2">
    <location>
        <position position="164"/>
    </location>
</feature>
<feature type="modified residue" description="Phosphoserine" evidence="2">
    <location>
        <position position="187"/>
    </location>
</feature>
<feature type="modified residue" description="Phosphothreonine" evidence="2">
    <location>
        <position position="249"/>
    </location>
</feature>
<feature type="modified residue" description="Phosphoserine" evidence="2">
    <location>
        <position position="256"/>
    </location>
</feature>
<feature type="modified residue" description="Phosphothreonine" evidence="2">
    <location>
        <position position="257"/>
    </location>
</feature>
<feature type="modified residue" description="Phosphothreonine" evidence="2">
    <location>
        <position position="281"/>
    </location>
</feature>
<feature type="modified residue" description="Phosphoserine" evidence="4">
    <location>
        <position position="291"/>
    </location>
</feature>
<feature type="modified residue" description="Phosphoserine" evidence="4">
    <location>
        <position position="293"/>
    </location>
</feature>
<feature type="modified residue" description="Phosphothreonine" evidence="4">
    <location>
        <position position="297"/>
    </location>
</feature>
<feature type="modified residue" description="Phosphoserine" evidence="4">
    <location>
        <position position="300"/>
    </location>
</feature>
<feature type="modified residue" description="Phosphoserine" evidence="2">
    <location>
        <position position="373"/>
    </location>
</feature>
<feature type="modified residue" description="Phosphothreonine" evidence="2">
    <location>
        <position position="374"/>
    </location>
</feature>
<dbReference type="EMBL" id="M24731">
    <property type="protein sequence ID" value="AAA74752.1"/>
    <property type="molecule type" value="Genomic_RNA"/>
</dbReference>
<dbReference type="PIR" id="A30118">
    <property type="entry name" value="RRNZMS"/>
</dbReference>
<dbReference type="SMR" id="P19717"/>
<dbReference type="CDD" id="cd21031">
    <property type="entry name" value="MEV_P-protein-C_like"/>
    <property type="match status" value="1"/>
</dbReference>
<dbReference type="Gene3D" id="1.20.5.300">
    <property type="match status" value="1"/>
</dbReference>
<dbReference type="Gene3D" id="1.10.8.10">
    <property type="entry name" value="DNA helicase RuvA subunit, C-terminal domain"/>
    <property type="match status" value="1"/>
</dbReference>
<dbReference type="InterPro" id="IPR004897">
    <property type="entry name" value="P/V_Pprotein_paramyxoviral"/>
</dbReference>
<dbReference type="Pfam" id="PF03210">
    <property type="entry name" value="Paramyx_P_V_C"/>
    <property type="match status" value="1"/>
</dbReference>
<name>PHOSP_MUMP1</name>
<comment type="function">
    <text evidence="3 4">Essential cofactor of the RNA polymerase L that plays a central role in the transcription and replication by forming the polymerase complex with RNA polymerase L and recruiting L to the genomic N-RNA template for RNA synthesis (By similarity). Also plays a central role in the encapsidation of nascent RNA chains by forming the encapsidation complex with the nucleocapsid protein N (N-P complex). Acts as a chaperone for newly synthesized free N protein, so-called N0, allowing encapsidation of nascent RNA chains during replication (By similarity). The nucleoprotein protein N prevents excessive phosphorylation of P, which leads to down-regulation of viral transcription/ replication. Participates, together with N, in the formation of viral factories (viroplasms), which are large inclusions in the host cytoplasm where replication takes place (By similarity).</text>
</comment>
<comment type="subunit">
    <text evidence="1 4 6">Homotetramer (By similarity). Interacts (via multimerization domain) with polymerase L; this interaction forms the polymerase L-P complex (By similarity). Interacts (via N-terminus) with N0 (via Ncore); this interaction allows P to chaperon N0 to avoid N polymerization before encapsidation (By similarity). Interacts (via C-terminus) with N-RNA template; this interaction positions the polymerase on the template for both transcription and replication (By similarity). Interacts with host RPS6KB1 kinase; this interaction may play a role in the viral replication and transcription (By similarity).</text>
</comment>
<comment type="domain">
    <text evidence="1 7">The N-terminus consists of a long intrinsically disordered tail. The central part contains the coiled-coil multimerization domain (MD or OD) (By similarity). Forms a four-stranded coiled coil structure (By similarity). The C-terminus constitutes the alpha-helical X domain (XD) that binds to the nucleocapsid (N-RNA complex) and the L polymerase (By similarity).</text>
</comment>
<comment type="RNA editing">
    <location>
        <position position="155" evidence="5"/>
    </location>
    <text>Partially edited. RNA editing at this position consists of an insertion of 2 or 4 guanine nucleotides. The sequence displayed here is the P protein, derived from the edited RNA (+ 2 nucleotides). The unedited RNA gives rise to the V protein (AC P60167). The edited RNA (+ 4 nucleotide) gives rise to the I protein.</text>
</comment>
<comment type="similarity">
    <text evidence="9">Belongs to the rubulavirus/avulavirus P protein family.</text>
</comment>
<keyword id="KW-0597">Phosphoprotein</keyword>
<keyword id="KW-0691">RNA editing</keyword>
<keyword id="KW-0693">Viral RNA replication</keyword>
<proteinExistence type="inferred from homology"/>
<sequence length="390" mass="41569">MDQFIKQDETGDLIETGMNVANHFLSAPIQGTNSLSKASIIPGVAPVLIGNPEQKNIQHPTASHQGSKSKGSGSGVRSIIVPPSEASNGGTQIPEPLFAQTGQGGIVTTVYQDPTIQPTGSYRSVELAKIGKERMINRFVEKPRTSTPVTEFKRGAGSRAQGQTIQEEGIDGNGASAGSKERSGSLSGATLYAHLSLPQQDSTPANVGIAPQSAISANEIMDLLRGMDARLQHLEQKVDKVLAQGSMVTQIKNELSTVKTTLATIEGMMATVKIMDPGNPTGVPVDELRRSFSDHVTIVSGPGDVPFSSSEEPTLYLDELARPVSKPRPAKQTKPQPVKDLAGRKVMITKMITDCVANPQMKQAFEQRLAKASTEDALNDIKKDIIRSAI</sequence>
<evidence type="ECO:0000250" key="1">
    <source>
        <dbReference type="UniProtKB" id="C0JJ97"/>
    </source>
</evidence>
<evidence type="ECO:0000250" key="2">
    <source>
        <dbReference type="UniProtKB" id="F8V2V0"/>
    </source>
</evidence>
<evidence type="ECO:0000250" key="3">
    <source>
        <dbReference type="UniProtKB" id="P06162"/>
    </source>
</evidence>
<evidence type="ECO:0000250" key="4">
    <source>
        <dbReference type="UniProtKB" id="P16072"/>
    </source>
</evidence>
<evidence type="ECO:0000250" key="5">
    <source>
        <dbReference type="UniProtKB" id="P16595"/>
    </source>
</evidence>
<evidence type="ECO:0000250" key="6">
    <source>
        <dbReference type="UniProtKB" id="Q77M42"/>
    </source>
</evidence>
<evidence type="ECO:0000250" key="7">
    <source>
        <dbReference type="UniProtKB" id="Q9WMB4"/>
    </source>
</evidence>
<evidence type="ECO:0000256" key="8">
    <source>
        <dbReference type="SAM" id="MobiDB-lite"/>
    </source>
</evidence>
<evidence type="ECO:0000305" key="9"/>
<organism>
    <name type="scientific">Mumps virus (strain SBL-1)</name>
    <name type="common">MuV</name>
    <dbReference type="NCBI Taxonomy" id="11173"/>
    <lineage>
        <taxon>Viruses</taxon>
        <taxon>Riboviria</taxon>
        <taxon>Orthornavirae</taxon>
        <taxon>Negarnaviricota</taxon>
        <taxon>Haploviricotina</taxon>
        <taxon>Monjiviricetes</taxon>
        <taxon>Mononegavirales</taxon>
        <taxon>Paramyxoviridae</taxon>
        <taxon>Rubulavirinae</taxon>
        <taxon>Orthorubulavirus</taxon>
        <taxon>Orthorubulavirus parotitidis</taxon>
        <taxon>Mumps orthorubulavirus</taxon>
    </lineage>
</organism>
<reference key="1">
    <citation type="journal article" date="1989" name="Virology">
        <title>Sequence analysis of the mumps virus mRNA encoding the P protein.</title>
        <authorList>
            <person name="Elango N."/>
            <person name="Koevamees J."/>
            <person name="Norrby E."/>
        </authorList>
    </citation>
    <scope>NUCLEOTIDE SEQUENCE [GENOMIC RNA]</scope>
</reference>